<evidence type="ECO:0000255" key="1">
    <source>
        <dbReference type="HAMAP-Rule" id="MF_00019"/>
    </source>
</evidence>
<dbReference type="EC" id="2.3.1.274" evidence="1"/>
<dbReference type="EMBL" id="CP000916">
    <property type="protein sequence ID" value="ACM22715.1"/>
    <property type="molecule type" value="Genomic_DNA"/>
</dbReference>
<dbReference type="RefSeq" id="WP_015919034.1">
    <property type="nucleotide sequence ID" value="NC_011978.1"/>
</dbReference>
<dbReference type="SMR" id="B9K6Y2"/>
<dbReference type="STRING" id="309803.CTN_0539"/>
<dbReference type="KEGG" id="tna:CTN_0539"/>
<dbReference type="eggNOG" id="COG0416">
    <property type="taxonomic scope" value="Bacteria"/>
</dbReference>
<dbReference type="HOGENOM" id="CLU_039379_1_1_0"/>
<dbReference type="UniPathway" id="UPA00085"/>
<dbReference type="Proteomes" id="UP000000445">
    <property type="component" value="Chromosome"/>
</dbReference>
<dbReference type="GO" id="GO:0005737">
    <property type="term" value="C:cytoplasm"/>
    <property type="evidence" value="ECO:0007669"/>
    <property type="project" value="UniProtKB-SubCell"/>
</dbReference>
<dbReference type="GO" id="GO:0043811">
    <property type="term" value="F:phosphate:acyl-[acyl carrier protein] acyltransferase activity"/>
    <property type="evidence" value="ECO:0007669"/>
    <property type="project" value="UniProtKB-UniRule"/>
</dbReference>
<dbReference type="GO" id="GO:0006633">
    <property type="term" value="P:fatty acid biosynthetic process"/>
    <property type="evidence" value="ECO:0007669"/>
    <property type="project" value="UniProtKB-UniRule"/>
</dbReference>
<dbReference type="GO" id="GO:0008654">
    <property type="term" value="P:phospholipid biosynthetic process"/>
    <property type="evidence" value="ECO:0007669"/>
    <property type="project" value="UniProtKB-KW"/>
</dbReference>
<dbReference type="Gene3D" id="3.40.718.10">
    <property type="entry name" value="Isopropylmalate Dehydrogenase"/>
    <property type="match status" value="1"/>
</dbReference>
<dbReference type="HAMAP" id="MF_00019">
    <property type="entry name" value="PlsX"/>
    <property type="match status" value="1"/>
</dbReference>
<dbReference type="InterPro" id="IPR003664">
    <property type="entry name" value="FA_synthesis"/>
</dbReference>
<dbReference type="InterPro" id="IPR012281">
    <property type="entry name" value="Phospholipid_synth_PlsX-like"/>
</dbReference>
<dbReference type="NCBIfam" id="TIGR00182">
    <property type="entry name" value="plsX"/>
    <property type="match status" value="1"/>
</dbReference>
<dbReference type="PANTHER" id="PTHR30100">
    <property type="entry name" value="FATTY ACID/PHOSPHOLIPID SYNTHESIS PROTEIN PLSX"/>
    <property type="match status" value="1"/>
</dbReference>
<dbReference type="PANTHER" id="PTHR30100:SF1">
    <property type="entry name" value="PHOSPHATE ACYLTRANSFERASE"/>
    <property type="match status" value="1"/>
</dbReference>
<dbReference type="Pfam" id="PF02504">
    <property type="entry name" value="FA_synthesis"/>
    <property type="match status" value="1"/>
</dbReference>
<dbReference type="PIRSF" id="PIRSF002465">
    <property type="entry name" value="Phsphlp_syn_PlsX"/>
    <property type="match status" value="1"/>
</dbReference>
<dbReference type="SUPFAM" id="SSF53659">
    <property type="entry name" value="Isocitrate/Isopropylmalate dehydrogenase-like"/>
    <property type="match status" value="1"/>
</dbReference>
<accession>B9K6Y2</accession>
<gene>
    <name evidence="1" type="primary">plsX</name>
    <name type="ordered locus">CTN_0539</name>
</gene>
<proteinExistence type="inferred from homology"/>
<protein>
    <recommendedName>
        <fullName evidence="1">Phosphate acyltransferase</fullName>
        <ecNumber evidence="1">2.3.1.274</ecNumber>
    </recommendedName>
    <alternativeName>
        <fullName evidence="1">Acyl-ACP phosphotransacylase</fullName>
    </alternativeName>
    <alternativeName>
        <fullName evidence="1">Acyl-[acyl-carrier-protein]--phosphate acyltransferase</fullName>
    </alternativeName>
    <alternativeName>
        <fullName evidence="1">Phosphate-acyl-ACP acyltransferase</fullName>
    </alternativeName>
</protein>
<sequence length="327" mass="35050">MKIAVDVMGGDRAPDEILKGALLASKELESEIVLVGPREIVENAGLSFVETTEVVNMDDPPLEVLRKKDSSMHVGLKLVAEGKVDAFVSAGATGPLFLGATSIVGKIKGVERPALGVAVPSLKGFTVLIDAGANAKVRPEHLLDFSLMGIAYARVLGVESPRVGLLNIGSEENKGHEDLRKAFSLLKEHLGDNFYGNVEGHDINLGTVHVVVTDGFSGNVALKTMEGTAKLITSVMKESIKEGGLFSLIGAFLMKKSFDRMRERLDPRTYGGTFILGIRGIVVKAHGSSDAKAIRHAIRVAERGIRMNLVREIERGIPHVRNSGDGR</sequence>
<keyword id="KW-0963">Cytoplasm</keyword>
<keyword id="KW-0444">Lipid biosynthesis</keyword>
<keyword id="KW-0443">Lipid metabolism</keyword>
<keyword id="KW-0594">Phospholipid biosynthesis</keyword>
<keyword id="KW-1208">Phospholipid metabolism</keyword>
<keyword id="KW-0808">Transferase</keyword>
<comment type="function">
    <text evidence="1">Catalyzes the reversible formation of acyl-phosphate (acyl-PO(4)) from acyl-[acyl-carrier-protein] (acyl-ACP). This enzyme utilizes acyl-ACP as fatty acyl donor, but not acyl-CoA.</text>
</comment>
<comment type="catalytic activity">
    <reaction evidence="1">
        <text>a fatty acyl-[ACP] + phosphate = an acyl phosphate + holo-[ACP]</text>
        <dbReference type="Rhea" id="RHEA:42292"/>
        <dbReference type="Rhea" id="RHEA-COMP:9685"/>
        <dbReference type="Rhea" id="RHEA-COMP:14125"/>
        <dbReference type="ChEBI" id="CHEBI:43474"/>
        <dbReference type="ChEBI" id="CHEBI:59918"/>
        <dbReference type="ChEBI" id="CHEBI:64479"/>
        <dbReference type="ChEBI" id="CHEBI:138651"/>
        <dbReference type="EC" id="2.3.1.274"/>
    </reaction>
</comment>
<comment type="pathway">
    <text evidence="1">Lipid metabolism; phospholipid metabolism.</text>
</comment>
<comment type="subunit">
    <text evidence="1">Homodimer. Probably interacts with PlsY.</text>
</comment>
<comment type="subcellular location">
    <subcellularLocation>
        <location evidence="1">Cytoplasm</location>
    </subcellularLocation>
    <text evidence="1">Associated with the membrane possibly through PlsY.</text>
</comment>
<comment type="similarity">
    <text evidence="1">Belongs to the PlsX family.</text>
</comment>
<reference key="1">
    <citation type="submission" date="2007-11" db="EMBL/GenBank/DDBJ databases">
        <title>The genome sequence of the hyperthermophilic bacterium Thermotoga neapolitana.</title>
        <authorList>
            <person name="Lim S.K."/>
            <person name="Kim J.S."/>
            <person name="Cha S.H."/>
            <person name="Park B.C."/>
            <person name="Lee D.S."/>
            <person name="Tae H.S."/>
            <person name="Kim S.-J."/>
            <person name="Kim J.J."/>
            <person name="Park K.J."/>
            <person name="Lee S.Y."/>
        </authorList>
    </citation>
    <scope>NUCLEOTIDE SEQUENCE [LARGE SCALE GENOMIC DNA]</scope>
    <source>
        <strain>ATCC 49049 / DSM 4359 / NBRC 107923 / NS-E</strain>
    </source>
</reference>
<organism>
    <name type="scientific">Thermotoga neapolitana (strain ATCC 49049 / DSM 4359 / NBRC 107923 / NS-E)</name>
    <dbReference type="NCBI Taxonomy" id="309803"/>
    <lineage>
        <taxon>Bacteria</taxon>
        <taxon>Thermotogati</taxon>
        <taxon>Thermotogota</taxon>
        <taxon>Thermotogae</taxon>
        <taxon>Thermotogales</taxon>
        <taxon>Thermotogaceae</taxon>
        <taxon>Thermotoga</taxon>
    </lineage>
</organism>
<feature type="chain" id="PRO_1000193154" description="Phosphate acyltransferase">
    <location>
        <begin position="1"/>
        <end position="327"/>
    </location>
</feature>
<name>PLSX_THENN</name>